<reference key="1">
    <citation type="submission" date="2003-03" db="EMBL/GenBank/DDBJ databases">
        <title>The complete genome sequence of Neisseria gonorrhoeae.</title>
        <authorList>
            <person name="Lewis L.A."/>
            <person name="Gillaspy A.F."/>
            <person name="McLaughlin R.E."/>
            <person name="Gipson M."/>
            <person name="Ducey T.F."/>
            <person name="Ownbey T."/>
            <person name="Hartman K."/>
            <person name="Nydick C."/>
            <person name="Carson M.B."/>
            <person name="Vaughn J."/>
            <person name="Thomson C."/>
            <person name="Song L."/>
            <person name="Lin S."/>
            <person name="Yuan X."/>
            <person name="Najar F."/>
            <person name="Zhan M."/>
            <person name="Ren Q."/>
            <person name="Zhu H."/>
            <person name="Qi S."/>
            <person name="Kenton S.M."/>
            <person name="Lai H."/>
            <person name="White J.D."/>
            <person name="Clifton S."/>
            <person name="Roe B.A."/>
            <person name="Dyer D.W."/>
        </authorList>
    </citation>
    <scope>NUCLEOTIDE SEQUENCE [LARGE SCALE GENOMIC DNA]</scope>
    <source>
        <strain>ATCC 700825 / FA 1090</strain>
    </source>
</reference>
<organism>
    <name type="scientific">Neisseria gonorrhoeae (strain ATCC 700825 / FA 1090)</name>
    <dbReference type="NCBI Taxonomy" id="242231"/>
    <lineage>
        <taxon>Bacteria</taxon>
        <taxon>Pseudomonadati</taxon>
        <taxon>Pseudomonadota</taxon>
        <taxon>Betaproteobacteria</taxon>
        <taxon>Neisseriales</taxon>
        <taxon>Neisseriaceae</taxon>
        <taxon>Neisseria</taxon>
    </lineage>
</organism>
<protein>
    <recommendedName>
        <fullName evidence="1">Histidine--tRNA ligase</fullName>
        <ecNumber evidence="1">6.1.1.21</ecNumber>
    </recommendedName>
    <alternativeName>
        <fullName evidence="1">Histidyl-tRNA synthetase</fullName>
        <shortName evidence="1">HisRS</shortName>
    </alternativeName>
</protein>
<feature type="chain" id="PRO_0000136208" description="Histidine--tRNA ligase">
    <location>
        <begin position="1"/>
        <end position="431"/>
    </location>
</feature>
<name>SYH_NEIG1</name>
<keyword id="KW-0030">Aminoacyl-tRNA synthetase</keyword>
<keyword id="KW-0067">ATP-binding</keyword>
<keyword id="KW-0963">Cytoplasm</keyword>
<keyword id="KW-0436">Ligase</keyword>
<keyword id="KW-0547">Nucleotide-binding</keyword>
<keyword id="KW-0648">Protein biosynthesis</keyword>
<keyword id="KW-1185">Reference proteome</keyword>
<dbReference type="EC" id="6.1.1.21" evidence="1"/>
<dbReference type="EMBL" id="AE004969">
    <property type="protein sequence ID" value="AAW89169.1"/>
    <property type="molecule type" value="Genomic_DNA"/>
</dbReference>
<dbReference type="RefSeq" id="WP_003696863.1">
    <property type="nucleotide sequence ID" value="NC_002946.2"/>
</dbReference>
<dbReference type="RefSeq" id="YP_207581.1">
    <property type="nucleotide sequence ID" value="NC_002946.2"/>
</dbReference>
<dbReference type="SMR" id="Q5F9G8"/>
<dbReference type="STRING" id="242231.NGO_0426"/>
<dbReference type="KEGG" id="ngo:NGO_0426"/>
<dbReference type="PATRIC" id="fig|242231.10.peg.510"/>
<dbReference type="HOGENOM" id="CLU_025113_1_1_4"/>
<dbReference type="Proteomes" id="UP000000535">
    <property type="component" value="Chromosome"/>
</dbReference>
<dbReference type="GO" id="GO:0005737">
    <property type="term" value="C:cytoplasm"/>
    <property type="evidence" value="ECO:0007669"/>
    <property type="project" value="UniProtKB-SubCell"/>
</dbReference>
<dbReference type="GO" id="GO:0005524">
    <property type="term" value="F:ATP binding"/>
    <property type="evidence" value="ECO:0007669"/>
    <property type="project" value="UniProtKB-UniRule"/>
</dbReference>
<dbReference type="GO" id="GO:0004821">
    <property type="term" value="F:histidine-tRNA ligase activity"/>
    <property type="evidence" value="ECO:0007669"/>
    <property type="project" value="UniProtKB-UniRule"/>
</dbReference>
<dbReference type="GO" id="GO:0006427">
    <property type="term" value="P:histidyl-tRNA aminoacylation"/>
    <property type="evidence" value="ECO:0007669"/>
    <property type="project" value="UniProtKB-UniRule"/>
</dbReference>
<dbReference type="CDD" id="cd00773">
    <property type="entry name" value="HisRS-like_core"/>
    <property type="match status" value="1"/>
</dbReference>
<dbReference type="CDD" id="cd00859">
    <property type="entry name" value="HisRS_anticodon"/>
    <property type="match status" value="1"/>
</dbReference>
<dbReference type="FunFam" id="3.30.930.10:FF:000005">
    <property type="entry name" value="Histidine--tRNA ligase"/>
    <property type="match status" value="1"/>
</dbReference>
<dbReference type="Gene3D" id="3.40.50.800">
    <property type="entry name" value="Anticodon-binding domain"/>
    <property type="match status" value="1"/>
</dbReference>
<dbReference type="Gene3D" id="3.30.930.10">
    <property type="entry name" value="Bira Bifunctional Protein, Domain 2"/>
    <property type="match status" value="1"/>
</dbReference>
<dbReference type="HAMAP" id="MF_00127">
    <property type="entry name" value="His_tRNA_synth"/>
    <property type="match status" value="1"/>
</dbReference>
<dbReference type="InterPro" id="IPR006195">
    <property type="entry name" value="aa-tRNA-synth_II"/>
</dbReference>
<dbReference type="InterPro" id="IPR045864">
    <property type="entry name" value="aa-tRNA-synth_II/BPL/LPL"/>
</dbReference>
<dbReference type="InterPro" id="IPR004154">
    <property type="entry name" value="Anticodon-bd"/>
</dbReference>
<dbReference type="InterPro" id="IPR036621">
    <property type="entry name" value="Anticodon-bd_dom_sf"/>
</dbReference>
<dbReference type="InterPro" id="IPR015807">
    <property type="entry name" value="His-tRNA-ligase"/>
</dbReference>
<dbReference type="InterPro" id="IPR041715">
    <property type="entry name" value="HisRS-like_core"/>
</dbReference>
<dbReference type="InterPro" id="IPR004516">
    <property type="entry name" value="HisRS/HisZ"/>
</dbReference>
<dbReference type="InterPro" id="IPR033656">
    <property type="entry name" value="HisRS_anticodon"/>
</dbReference>
<dbReference type="NCBIfam" id="TIGR00442">
    <property type="entry name" value="hisS"/>
    <property type="match status" value="1"/>
</dbReference>
<dbReference type="PANTHER" id="PTHR43707:SF1">
    <property type="entry name" value="HISTIDINE--TRNA LIGASE, MITOCHONDRIAL-RELATED"/>
    <property type="match status" value="1"/>
</dbReference>
<dbReference type="PANTHER" id="PTHR43707">
    <property type="entry name" value="HISTIDYL-TRNA SYNTHETASE"/>
    <property type="match status" value="1"/>
</dbReference>
<dbReference type="Pfam" id="PF03129">
    <property type="entry name" value="HGTP_anticodon"/>
    <property type="match status" value="1"/>
</dbReference>
<dbReference type="Pfam" id="PF13393">
    <property type="entry name" value="tRNA-synt_His"/>
    <property type="match status" value="1"/>
</dbReference>
<dbReference type="PIRSF" id="PIRSF001549">
    <property type="entry name" value="His-tRNA_synth"/>
    <property type="match status" value="1"/>
</dbReference>
<dbReference type="SUPFAM" id="SSF52954">
    <property type="entry name" value="Class II aaRS ABD-related"/>
    <property type="match status" value="1"/>
</dbReference>
<dbReference type="SUPFAM" id="SSF55681">
    <property type="entry name" value="Class II aaRS and biotin synthetases"/>
    <property type="match status" value="1"/>
</dbReference>
<dbReference type="PROSITE" id="PS50862">
    <property type="entry name" value="AA_TRNA_LIGASE_II"/>
    <property type="match status" value="1"/>
</dbReference>
<gene>
    <name evidence="1" type="primary">hisS</name>
    <name type="ordered locus">NGO_0426</name>
</gene>
<evidence type="ECO:0000255" key="1">
    <source>
        <dbReference type="HAMAP-Rule" id="MF_00127"/>
    </source>
</evidence>
<sequence length="431" mass="48342">MAQKIQSVKGMNDLLPVGQKDFKLTAVFWQAFEDTVNRWTRAYGYQQIRTPIVEQTGLFVRSIGEETDVVGKEMYTFSDSNDSLSLSLRPEGTASCLRAVVEHNLLYNSPQKLWYMGPMFRRERPQKGRYRQFHQVGIEALGFEGPDIDAEIIAMSADLWEKLGIREYLTLEINSLGNREERAAHRAALVEYLTRYEAQLDEDSKRRLKTNPLRVLDTKNPDLQEICNAAPRLVDYLGEASQNHYARFKAMLDGLGIQYIENSRLVRGLDYYNQTVFEWTTDKLGAQATVCGGGRYDGLIEELGGKPAPSIGFAMGIERLLLLVSEYGSLEVNAAPDVYAMHQGEGADLQVMKYAQALRAQGFNVIQHSGYQSLKAQMKKADNSGARFALIVAQDELADGTVTLKDMNGAHGQQTVSATDLTDTLQQWKNA</sequence>
<accession>Q5F9G8</accession>
<proteinExistence type="inferred from homology"/>
<comment type="catalytic activity">
    <reaction evidence="1">
        <text>tRNA(His) + L-histidine + ATP = L-histidyl-tRNA(His) + AMP + diphosphate + H(+)</text>
        <dbReference type="Rhea" id="RHEA:17313"/>
        <dbReference type="Rhea" id="RHEA-COMP:9665"/>
        <dbReference type="Rhea" id="RHEA-COMP:9689"/>
        <dbReference type="ChEBI" id="CHEBI:15378"/>
        <dbReference type="ChEBI" id="CHEBI:30616"/>
        <dbReference type="ChEBI" id="CHEBI:33019"/>
        <dbReference type="ChEBI" id="CHEBI:57595"/>
        <dbReference type="ChEBI" id="CHEBI:78442"/>
        <dbReference type="ChEBI" id="CHEBI:78527"/>
        <dbReference type="ChEBI" id="CHEBI:456215"/>
        <dbReference type="EC" id="6.1.1.21"/>
    </reaction>
</comment>
<comment type="subunit">
    <text evidence="1">Homodimer.</text>
</comment>
<comment type="subcellular location">
    <subcellularLocation>
        <location evidence="1">Cytoplasm</location>
    </subcellularLocation>
</comment>
<comment type="similarity">
    <text evidence="1">Belongs to the class-II aminoacyl-tRNA synthetase family.</text>
</comment>